<dbReference type="EMBL" id="CR382126">
    <property type="protein sequence ID" value="CAG98409.1"/>
    <property type="status" value="ALT_INIT"/>
    <property type="molecule type" value="Genomic_DNA"/>
</dbReference>
<dbReference type="RefSeq" id="XP_455701.1">
    <property type="nucleotide sequence ID" value="XM_455701.1"/>
</dbReference>
<dbReference type="SMR" id="Q6CK38"/>
<dbReference type="FunCoup" id="Q6CK38">
    <property type="interactions" value="66"/>
</dbReference>
<dbReference type="PaxDb" id="284590-Q6CK38"/>
<dbReference type="KEGG" id="kla:KLLA0_F13794g"/>
<dbReference type="eggNOG" id="ENOG502SCF7">
    <property type="taxonomic scope" value="Eukaryota"/>
</dbReference>
<dbReference type="HOGENOM" id="CLU_057728_0_0_1"/>
<dbReference type="InParanoid" id="Q6CK38"/>
<dbReference type="Proteomes" id="UP000000598">
    <property type="component" value="Chromosome F"/>
</dbReference>
<dbReference type="GO" id="GO:0005737">
    <property type="term" value="C:cytoplasm"/>
    <property type="evidence" value="ECO:0007669"/>
    <property type="project" value="UniProtKB-SubCell"/>
</dbReference>
<dbReference type="GO" id="GO:0031261">
    <property type="term" value="C:DNA replication preinitiation complex"/>
    <property type="evidence" value="ECO:0007669"/>
    <property type="project" value="TreeGrafter"/>
</dbReference>
<dbReference type="GO" id="GO:0003688">
    <property type="term" value="F:DNA replication origin binding"/>
    <property type="evidence" value="ECO:0007669"/>
    <property type="project" value="TreeGrafter"/>
</dbReference>
<dbReference type="GO" id="GO:0003697">
    <property type="term" value="F:single-stranded DNA binding"/>
    <property type="evidence" value="ECO:0007669"/>
    <property type="project" value="TreeGrafter"/>
</dbReference>
<dbReference type="GO" id="GO:0006270">
    <property type="term" value="P:DNA replication initiation"/>
    <property type="evidence" value="ECO:0007669"/>
    <property type="project" value="InterPro"/>
</dbReference>
<dbReference type="GO" id="GO:0000727">
    <property type="term" value="P:double-strand break repair via break-induced replication"/>
    <property type="evidence" value="ECO:0007669"/>
    <property type="project" value="TreeGrafter"/>
</dbReference>
<dbReference type="GO" id="GO:1902977">
    <property type="term" value="P:mitotic DNA replication preinitiation complex assembly"/>
    <property type="evidence" value="ECO:0007669"/>
    <property type="project" value="TreeGrafter"/>
</dbReference>
<dbReference type="CDD" id="cd22289">
    <property type="entry name" value="RecQL4_SLD2_NTD"/>
    <property type="match status" value="1"/>
</dbReference>
<dbReference type="FunFam" id="1.10.10.1460:FF:000001">
    <property type="entry name" value="DNA replication regulator Sld2"/>
    <property type="match status" value="1"/>
</dbReference>
<dbReference type="Gene3D" id="1.10.10.1460">
    <property type="match status" value="1"/>
</dbReference>
<dbReference type="InterPro" id="IPR021110">
    <property type="entry name" value="DNA_rep_checkpnt_protein"/>
</dbReference>
<dbReference type="InterPro" id="IPR040203">
    <property type="entry name" value="Sld2"/>
</dbReference>
<dbReference type="PANTHER" id="PTHR28124">
    <property type="entry name" value="DNA REPLICATION REGULATOR SLD2"/>
    <property type="match status" value="1"/>
</dbReference>
<dbReference type="PANTHER" id="PTHR28124:SF1">
    <property type="entry name" value="DNA REPLICATION REGULATOR SLD2"/>
    <property type="match status" value="1"/>
</dbReference>
<dbReference type="Pfam" id="PF11719">
    <property type="entry name" value="Drc1-Sld2"/>
    <property type="match status" value="1"/>
</dbReference>
<sequence>MNGIKETDTVNAPLLLVISSASMDALKIEIKLWERAFEKEHGRLPEKDDIKKDKEVKRKYKQYAQLKKDATVKPSVEVNVEQTPVKSHVNNTKAEFGPTPQMNGKLVSIFEMQVSAMKTHQSDQEDIVGSPVRSNDLVRRQLNFSITPNSSPMKQVPNLSANIVVSRPKYGPNSPMRIGDIGLQLSETPKTLGRTLDLKSSPFSPSPLIKRPVKTLSQLAKEHAIIKDEFESNPEDFSEFTAIRTLMEKLMQEEHMDIIEEGDEGTVGNETESNYVRKVKTIKKRTKAKMRPAALNEKSTNIPDKNVHEQLAKLKEREYNKMLGKEVEESESDSEQQSNPPVKKKQRKSKYNLVSNNFKRLNLPTKAGRNRASKWRGRR</sequence>
<reference key="1">
    <citation type="journal article" date="2004" name="Nature">
        <title>Genome evolution in yeasts.</title>
        <authorList>
            <person name="Dujon B."/>
            <person name="Sherman D."/>
            <person name="Fischer G."/>
            <person name="Durrens P."/>
            <person name="Casaregola S."/>
            <person name="Lafontaine I."/>
            <person name="de Montigny J."/>
            <person name="Marck C."/>
            <person name="Neuveglise C."/>
            <person name="Talla E."/>
            <person name="Goffard N."/>
            <person name="Frangeul L."/>
            <person name="Aigle M."/>
            <person name="Anthouard V."/>
            <person name="Babour A."/>
            <person name="Barbe V."/>
            <person name="Barnay S."/>
            <person name="Blanchin S."/>
            <person name="Beckerich J.-M."/>
            <person name="Beyne E."/>
            <person name="Bleykasten C."/>
            <person name="Boisrame A."/>
            <person name="Boyer J."/>
            <person name="Cattolico L."/>
            <person name="Confanioleri F."/>
            <person name="de Daruvar A."/>
            <person name="Despons L."/>
            <person name="Fabre E."/>
            <person name="Fairhead C."/>
            <person name="Ferry-Dumazet H."/>
            <person name="Groppi A."/>
            <person name="Hantraye F."/>
            <person name="Hennequin C."/>
            <person name="Jauniaux N."/>
            <person name="Joyet P."/>
            <person name="Kachouri R."/>
            <person name="Kerrest A."/>
            <person name="Koszul R."/>
            <person name="Lemaire M."/>
            <person name="Lesur I."/>
            <person name="Ma L."/>
            <person name="Muller H."/>
            <person name="Nicaud J.-M."/>
            <person name="Nikolski M."/>
            <person name="Oztas S."/>
            <person name="Ozier-Kalogeropoulos O."/>
            <person name="Pellenz S."/>
            <person name="Potier S."/>
            <person name="Richard G.-F."/>
            <person name="Straub M.-L."/>
            <person name="Suleau A."/>
            <person name="Swennen D."/>
            <person name="Tekaia F."/>
            <person name="Wesolowski-Louvel M."/>
            <person name="Westhof E."/>
            <person name="Wirth B."/>
            <person name="Zeniou-Meyer M."/>
            <person name="Zivanovic Y."/>
            <person name="Bolotin-Fukuhara M."/>
            <person name="Thierry A."/>
            <person name="Bouchier C."/>
            <person name="Caudron B."/>
            <person name="Scarpelli C."/>
            <person name="Gaillardin C."/>
            <person name="Weissenbach J."/>
            <person name="Wincker P."/>
            <person name="Souciet J.-L."/>
        </authorList>
    </citation>
    <scope>NUCLEOTIDE SEQUENCE [LARGE SCALE GENOMIC DNA]</scope>
    <source>
        <strain>ATCC 8585 / CBS 2359 / DSM 70799 / NBRC 1267 / NRRL Y-1140 / WM37</strain>
    </source>
</reference>
<proteinExistence type="inferred from homology"/>
<protein>
    <recommendedName>
        <fullName>DNA replication regulator SLD2</fullName>
    </recommendedName>
</protein>
<gene>
    <name type="primary">SLD2</name>
    <name type="ordered locus">KLLA0F13794g</name>
</gene>
<accession>Q6CK38</accession>
<name>SLD2_KLULA</name>
<keyword id="KW-0131">Cell cycle</keyword>
<keyword id="KW-0963">Cytoplasm</keyword>
<keyword id="KW-0235">DNA replication</keyword>
<keyword id="KW-0539">Nucleus</keyword>
<keyword id="KW-1185">Reference proteome</keyword>
<organism>
    <name type="scientific">Kluyveromyces lactis (strain ATCC 8585 / CBS 2359 / DSM 70799 / NBRC 1267 / NRRL Y-1140 / WM37)</name>
    <name type="common">Yeast</name>
    <name type="synonym">Candida sphaerica</name>
    <dbReference type="NCBI Taxonomy" id="284590"/>
    <lineage>
        <taxon>Eukaryota</taxon>
        <taxon>Fungi</taxon>
        <taxon>Dikarya</taxon>
        <taxon>Ascomycota</taxon>
        <taxon>Saccharomycotina</taxon>
        <taxon>Saccharomycetes</taxon>
        <taxon>Saccharomycetales</taxon>
        <taxon>Saccharomycetaceae</taxon>
        <taxon>Kluyveromyces</taxon>
    </lineage>
</organism>
<comment type="function">
    <text evidence="1">Has a role in the initiation of DNA replication. Required at S-phase checkpoint (By similarity).</text>
</comment>
<comment type="subcellular location">
    <subcellularLocation>
        <location>Cytoplasm</location>
    </subcellularLocation>
    <subcellularLocation>
        <location evidence="1">Nucleus</location>
    </subcellularLocation>
</comment>
<comment type="similarity">
    <text evidence="3">Belongs to the SLD2 family.</text>
</comment>
<comment type="sequence caution" evidence="3">
    <conflict type="erroneous initiation">
        <sequence resource="EMBL-CDS" id="CAG98409"/>
    </conflict>
</comment>
<feature type="chain" id="PRO_0000278436" description="DNA replication regulator SLD2">
    <location>
        <begin position="1"/>
        <end position="379"/>
    </location>
</feature>
<feature type="region of interest" description="Disordered" evidence="2">
    <location>
        <begin position="287"/>
        <end position="306"/>
    </location>
</feature>
<feature type="region of interest" description="Disordered" evidence="2">
    <location>
        <begin position="324"/>
        <end position="379"/>
    </location>
</feature>
<feature type="compositionally biased region" description="Basic residues" evidence="2">
    <location>
        <begin position="368"/>
        <end position="379"/>
    </location>
</feature>
<evidence type="ECO:0000250" key="1"/>
<evidence type="ECO:0000256" key="2">
    <source>
        <dbReference type="SAM" id="MobiDB-lite"/>
    </source>
</evidence>
<evidence type="ECO:0000305" key="3"/>